<feature type="chain" id="PRO_0000262549" description="Cold shock protein CspA">
    <location>
        <begin position="1"/>
        <end position="66"/>
    </location>
</feature>
<feature type="domain" description="CSD">
    <location>
        <begin position="1"/>
        <end position="66"/>
    </location>
</feature>
<keyword id="KW-0963">Cytoplasm</keyword>
<gene>
    <name type="primary">cspA</name>
    <name type="ordered locus">SH1509</name>
</gene>
<comment type="function">
    <text evidence="1">Involved in cold stress response.</text>
</comment>
<comment type="subcellular location">
    <subcellularLocation>
        <location evidence="1">Cytoplasm</location>
    </subcellularLocation>
</comment>
<name>CSPA_STAHJ</name>
<dbReference type="EMBL" id="AP006716">
    <property type="protein sequence ID" value="BAE04818.1"/>
    <property type="molecule type" value="Genomic_DNA"/>
</dbReference>
<dbReference type="RefSeq" id="WP_002433901.1">
    <property type="nucleotide sequence ID" value="NC_007168.1"/>
</dbReference>
<dbReference type="SMR" id="Q4L6A7"/>
<dbReference type="GeneID" id="93780899"/>
<dbReference type="KEGG" id="sha:SH1509"/>
<dbReference type="eggNOG" id="COG1278">
    <property type="taxonomic scope" value="Bacteria"/>
</dbReference>
<dbReference type="HOGENOM" id="CLU_117621_6_1_9"/>
<dbReference type="OrthoDB" id="9805039at2"/>
<dbReference type="Proteomes" id="UP000000543">
    <property type="component" value="Chromosome"/>
</dbReference>
<dbReference type="GO" id="GO:0005737">
    <property type="term" value="C:cytoplasm"/>
    <property type="evidence" value="ECO:0007669"/>
    <property type="project" value="UniProtKB-SubCell"/>
</dbReference>
<dbReference type="GO" id="GO:0003676">
    <property type="term" value="F:nucleic acid binding"/>
    <property type="evidence" value="ECO:0007669"/>
    <property type="project" value="InterPro"/>
</dbReference>
<dbReference type="CDD" id="cd04458">
    <property type="entry name" value="CSP_CDS"/>
    <property type="match status" value="1"/>
</dbReference>
<dbReference type="FunFam" id="2.40.50.140:FF:000006">
    <property type="entry name" value="Cold shock protein CspC"/>
    <property type="match status" value="1"/>
</dbReference>
<dbReference type="Gene3D" id="6.20.370.130">
    <property type="match status" value="1"/>
</dbReference>
<dbReference type="Gene3D" id="2.40.50.140">
    <property type="entry name" value="Nucleic acid-binding proteins"/>
    <property type="match status" value="1"/>
</dbReference>
<dbReference type="InterPro" id="IPR012156">
    <property type="entry name" value="Cold_shock_CspA"/>
</dbReference>
<dbReference type="InterPro" id="IPR050181">
    <property type="entry name" value="Cold_shock_domain"/>
</dbReference>
<dbReference type="InterPro" id="IPR011129">
    <property type="entry name" value="CSD"/>
</dbReference>
<dbReference type="InterPro" id="IPR019844">
    <property type="entry name" value="CSD_CS"/>
</dbReference>
<dbReference type="InterPro" id="IPR002059">
    <property type="entry name" value="CSP_DNA-bd"/>
</dbReference>
<dbReference type="InterPro" id="IPR012340">
    <property type="entry name" value="NA-bd_OB-fold"/>
</dbReference>
<dbReference type="PANTHER" id="PTHR11544">
    <property type="entry name" value="COLD SHOCK DOMAIN CONTAINING PROTEINS"/>
    <property type="match status" value="1"/>
</dbReference>
<dbReference type="Pfam" id="PF00313">
    <property type="entry name" value="CSD"/>
    <property type="match status" value="1"/>
</dbReference>
<dbReference type="PIRSF" id="PIRSF002599">
    <property type="entry name" value="Cold_shock_A"/>
    <property type="match status" value="1"/>
</dbReference>
<dbReference type="PRINTS" id="PR00050">
    <property type="entry name" value="COLDSHOCK"/>
</dbReference>
<dbReference type="SMART" id="SM00357">
    <property type="entry name" value="CSP"/>
    <property type="match status" value="1"/>
</dbReference>
<dbReference type="SUPFAM" id="SSF50249">
    <property type="entry name" value="Nucleic acid-binding proteins"/>
    <property type="match status" value="1"/>
</dbReference>
<dbReference type="PROSITE" id="PS00352">
    <property type="entry name" value="CSD_1"/>
    <property type="match status" value="1"/>
</dbReference>
<dbReference type="PROSITE" id="PS51857">
    <property type="entry name" value="CSD_2"/>
    <property type="match status" value="1"/>
</dbReference>
<protein>
    <recommendedName>
        <fullName>Cold shock protein CspA</fullName>
    </recommendedName>
</protein>
<proteinExistence type="inferred from homology"/>
<organism>
    <name type="scientific">Staphylococcus haemolyticus (strain JCSC1435)</name>
    <dbReference type="NCBI Taxonomy" id="279808"/>
    <lineage>
        <taxon>Bacteria</taxon>
        <taxon>Bacillati</taxon>
        <taxon>Bacillota</taxon>
        <taxon>Bacilli</taxon>
        <taxon>Bacillales</taxon>
        <taxon>Staphylococcaceae</taxon>
        <taxon>Staphylococcus</taxon>
    </lineage>
</organism>
<sequence length="66" mass="7337">MKQGTVKWFNAEKGFGFIEVEGENDVFVHFSAINQDGYKSLEEGQSVEFEVVEGDRGPQAANVVKL</sequence>
<evidence type="ECO:0000250" key="1"/>
<accession>Q4L6A7</accession>
<reference key="1">
    <citation type="journal article" date="2005" name="J. Bacteriol.">
        <title>Whole-genome sequencing of Staphylococcus haemolyticus uncovers the extreme plasticity of its genome and the evolution of human-colonizing staphylococcal species.</title>
        <authorList>
            <person name="Takeuchi F."/>
            <person name="Watanabe S."/>
            <person name="Baba T."/>
            <person name="Yuzawa H."/>
            <person name="Ito T."/>
            <person name="Morimoto Y."/>
            <person name="Kuroda M."/>
            <person name="Cui L."/>
            <person name="Takahashi M."/>
            <person name="Ankai A."/>
            <person name="Baba S."/>
            <person name="Fukui S."/>
            <person name="Lee J.C."/>
            <person name="Hiramatsu K."/>
        </authorList>
    </citation>
    <scope>NUCLEOTIDE SEQUENCE [LARGE SCALE GENOMIC DNA]</scope>
    <source>
        <strain>JCSC1435</strain>
    </source>
</reference>